<dbReference type="EC" id="4.2.1.20" evidence="1"/>
<dbReference type="EMBL" id="BA000030">
    <property type="protein sequence ID" value="BAC73889.1"/>
    <property type="molecule type" value="Genomic_DNA"/>
</dbReference>
<dbReference type="RefSeq" id="WP_010987579.1">
    <property type="nucleotide sequence ID" value="NZ_JZJK01000089.1"/>
</dbReference>
<dbReference type="SMR" id="Q82A81"/>
<dbReference type="GeneID" id="41543254"/>
<dbReference type="KEGG" id="sma:SAVERM_6178"/>
<dbReference type="eggNOG" id="COG0159">
    <property type="taxonomic scope" value="Bacteria"/>
</dbReference>
<dbReference type="HOGENOM" id="CLU_016734_0_0_11"/>
<dbReference type="OrthoDB" id="9804578at2"/>
<dbReference type="UniPathway" id="UPA00035">
    <property type="reaction ID" value="UER00044"/>
</dbReference>
<dbReference type="Proteomes" id="UP000000428">
    <property type="component" value="Chromosome"/>
</dbReference>
<dbReference type="GO" id="GO:0005829">
    <property type="term" value="C:cytosol"/>
    <property type="evidence" value="ECO:0007669"/>
    <property type="project" value="TreeGrafter"/>
</dbReference>
<dbReference type="GO" id="GO:0004834">
    <property type="term" value="F:tryptophan synthase activity"/>
    <property type="evidence" value="ECO:0007669"/>
    <property type="project" value="UniProtKB-UniRule"/>
</dbReference>
<dbReference type="CDD" id="cd04724">
    <property type="entry name" value="Tryptophan_synthase_alpha"/>
    <property type="match status" value="1"/>
</dbReference>
<dbReference type="FunFam" id="3.20.20.70:FF:000037">
    <property type="entry name" value="Tryptophan synthase alpha chain"/>
    <property type="match status" value="1"/>
</dbReference>
<dbReference type="Gene3D" id="3.20.20.70">
    <property type="entry name" value="Aldolase class I"/>
    <property type="match status" value="1"/>
</dbReference>
<dbReference type="HAMAP" id="MF_00131">
    <property type="entry name" value="Trp_synth_alpha"/>
    <property type="match status" value="1"/>
</dbReference>
<dbReference type="InterPro" id="IPR013785">
    <property type="entry name" value="Aldolase_TIM"/>
</dbReference>
<dbReference type="InterPro" id="IPR011060">
    <property type="entry name" value="RibuloseP-bd_barrel"/>
</dbReference>
<dbReference type="InterPro" id="IPR018204">
    <property type="entry name" value="Trp_synthase_alpha_AS"/>
</dbReference>
<dbReference type="InterPro" id="IPR002028">
    <property type="entry name" value="Trp_synthase_suA"/>
</dbReference>
<dbReference type="NCBIfam" id="TIGR00262">
    <property type="entry name" value="trpA"/>
    <property type="match status" value="1"/>
</dbReference>
<dbReference type="PANTHER" id="PTHR43406:SF1">
    <property type="entry name" value="TRYPTOPHAN SYNTHASE ALPHA CHAIN, CHLOROPLASTIC"/>
    <property type="match status" value="1"/>
</dbReference>
<dbReference type="PANTHER" id="PTHR43406">
    <property type="entry name" value="TRYPTOPHAN SYNTHASE, ALPHA CHAIN"/>
    <property type="match status" value="1"/>
</dbReference>
<dbReference type="Pfam" id="PF00290">
    <property type="entry name" value="Trp_syntA"/>
    <property type="match status" value="1"/>
</dbReference>
<dbReference type="SUPFAM" id="SSF51366">
    <property type="entry name" value="Ribulose-phoshate binding barrel"/>
    <property type="match status" value="1"/>
</dbReference>
<dbReference type="PROSITE" id="PS00167">
    <property type="entry name" value="TRP_SYNTHASE_ALPHA"/>
    <property type="match status" value="1"/>
</dbReference>
<sequence>MSGAAFSRQRGQLLSDTLAAAKAEGRSALIAYLPAGFPTVDGGIAAIKAVFDGGADVVEVGLPHSDPVLDGPVIQTADDIALRGGVRIADVMRTVREAHEATGKPVLVMTYWNPIDRYGVERFTAELAEAGGAGCILPDLPVQESALWREHAEKHGLATVFVVAPSSKDARLAEITAAGSGFVYAASLMGVTGTRASVGEQAQDLVRRTRATTDLPVCVGLGVSNATQAAEVAGFADGVIVGSAFVKLMLDAEDEAAGLEAVRALAGELAKGVRGGD</sequence>
<protein>
    <recommendedName>
        <fullName evidence="1">Tryptophan synthase alpha chain</fullName>
        <ecNumber evidence="1">4.2.1.20</ecNumber>
    </recommendedName>
</protein>
<organism>
    <name type="scientific">Streptomyces avermitilis (strain ATCC 31267 / DSM 46492 / JCM 5070 / NBRC 14893 / NCIMB 12804 / NRRL 8165 / MA-4680)</name>
    <dbReference type="NCBI Taxonomy" id="227882"/>
    <lineage>
        <taxon>Bacteria</taxon>
        <taxon>Bacillati</taxon>
        <taxon>Actinomycetota</taxon>
        <taxon>Actinomycetes</taxon>
        <taxon>Kitasatosporales</taxon>
        <taxon>Streptomycetaceae</taxon>
        <taxon>Streptomyces</taxon>
    </lineage>
</organism>
<reference key="1">
    <citation type="journal article" date="2001" name="Proc. Natl. Acad. Sci. U.S.A.">
        <title>Genome sequence of an industrial microorganism Streptomyces avermitilis: deducing the ability of producing secondary metabolites.</title>
        <authorList>
            <person name="Omura S."/>
            <person name="Ikeda H."/>
            <person name="Ishikawa J."/>
            <person name="Hanamoto A."/>
            <person name="Takahashi C."/>
            <person name="Shinose M."/>
            <person name="Takahashi Y."/>
            <person name="Horikawa H."/>
            <person name="Nakazawa H."/>
            <person name="Osonoe T."/>
            <person name="Kikuchi H."/>
            <person name="Shiba T."/>
            <person name="Sakaki Y."/>
            <person name="Hattori M."/>
        </authorList>
    </citation>
    <scope>NUCLEOTIDE SEQUENCE [LARGE SCALE GENOMIC DNA]</scope>
    <source>
        <strain>ATCC 31267 / DSM 46492 / JCM 5070 / NBRC 14893 / NCIMB 12804 / NRRL 8165 / MA-4680</strain>
    </source>
</reference>
<reference key="2">
    <citation type="journal article" date="2003" name="Nat. Biotechnol.">
        <title>Complete genome sequence and comparative analysis of the industrial microorganism Streptomyces avermitilis.</title>
        <authorList>
            <person name="Ikeda H."/>
            <person name="Ishikawa J."/>
            <person name="Hanamoto A."/>
            <person name="Shinose M."/>
            <person name="Kikuchi H."/>
            <person name="Shiba T."/>
            <person name="Sakaki Y."/>
            <person name="Hattori M."/>
            <person name="Omura S."/>
        </authorList>
    </citation>
    <scope>NUCLEOTIDE SEQUENCE [LARGE SCALE GENOMIC DNA]</scope>
    <source>
        <strain>ATCC 31267 / DSM 46492 / JCM 5070 / NBRC 14893 / NCIMB 12804 / NRRL 8165 / MA-4680</strain>
    </source>
</reference>
<name>TRPA_STRAW</name>
<proteinExistence type="inferred from homology"/>
<accession>Q82A81</accession>
<keyword id="KW-0028">Amino-acid biosynthesis</keyword>
<keyword id="KW-0057">Aromatic amino acid biosynthesis</keyword>
<keyword id="KW-0456">Lyase</keyword>
<keyword id="KW-1185">Reference proteome</keyword>
<keyword id="KW-0822">Tryptophan biosynthesis</keyword>
<gene>
    <name evidence="1" type="primary">trpA</name>
    <name type="ordered locus">SAV_6178</name>
</gene>
<feature type="chain" id="PRO_0000098851" description="Tryptophan synthase alpha chain">
    <location>
        <begin position="1"/>
        <end position="277"/>
    </location>
</feature>
<feature type="active site" description="Proton acceptor" evidence="1">
    <location>
        <position position="59"/>
    </location>
</feature>
<feature type="active site" description="Proton acceptor" evidence="1">
    <location>
        <position position="70"/>
    </location>
</feature>
<comment type="function">
    <text evidence="1">The alpha subunit is responsible for the aldol cleavage of indoleglycerol phosphate to indole and glyceraldehyde 3-phosphate.</text>
</comment>
<comment type="catalytic activity">
    <reaction evidence="1">
        <text>(1S,2R)-1-C-(indol-3-yl)glycerol 3-phosphate + L-serine = D-glyceraldehyde 3-phosphate + L-tryptophan + H2O</text>
        <dbReference type="Rhea" id="RHEA:10532"/>
        <dbReference type="ChEBI" id="CHEBI:15377"/>
        <dbReference type="ChEBI" id="CHEBI:33384"/>
        <dbReference type="ChEBI" id="CHEBI:57912"/>
        <dbReference type="ChEBI" id="CHEBI:58866"/>
        <dbReference type="ChEBI" id="CHEBI:59776"/>
        <dbReference type="EC" id="4.2.1.20"/>
    </reaction>
</comment>
<comment type="pathway">
    <text evidence="1">Amino-acid biosynthesis; L-tryptophan biosynthesis; L-tryptophan from chorismate: step 5/5.</text>
</comment>
<comment type="subunit">
    <text evidence="1">Tetramer of two alpha and two beta chains.</text>
</comment>
<comment type="similarity">
    <text evidence="1">Belongs to the TrpA family.</text>
</comment>
<evidence type="ECO:0000255" key="1">
    <source>
        <dbReference type="HAMAP-Rule" id="MF_00131"/>
    </source>
</evidence>